<sequence length="217" mass="23172">MSAPLTLALSKGRIFEETLPLLAAAGVQVAEDPETSRKLILPTTDPNLRVIIVRASDVPTYVEYGAADFGVAGKDVLVEHGGSGLYQPIDLNIARCRMSVAVPAGFDYANAVRQGARLRVATKYVETAREHFAAKGVHVDLIKLYGSMELAPLVGLADAIVDLVSSGGTLKANNLVEVEEIMSISSRLVVNQAALKLKRTALKPFLDAFERASQNGN</sequence>
<gene>
    <name evidence="1" type="primary">hisG</name>
    <name type="ordered locus">Bcep1808_0403</name>
</gene>
<evidence type="ECO:0000255" key="1">
    <source>
        <dbReference type="HAMAP-Rule" id="MF_01018"/>
    </source>
</evidence>
<comment type="function">
    <text evidence="1">Catalyzes the condensation of ATP and 5-phosphoribose 1-diphosphate to form N'-(5'-phosphoribosyl)-ATP (PR-ATP). Has a crucial role in the pathway because the rate of histidine biosynthesis seems to be controlled primarily by regulation of HisG enzymatic activity.</text>
</comment>
<comment type="catalytic activity">
    <reaction evidence="1">
        <text>1-(5-phospho-beta-D-ribosyl)-ATP + diphosphate = 5-phospho-alpha-D-ribose 1-diphosphate + ATP</text>
        <dbReference type="Rhea" id="RHEA:18473"/>
        <dbReference type="ChEBI" id="CHEBI:30616"/>
        <dbReference type="ChEBI" id="CHEBI:33019"/>
        <dbReference type="ChEBI" id="CHEBI:58017"/>
        <dbReference type="ChEBI" id="CHEBI:73183"/>
        <dbReference type="EC" id="2.4.2.17"/>
    </reaction>
</comment>
<comment type="pathway">
    <text evidence="1">Amino-acid biosynthesis; L-histidine biosynthesis; L-histidine from 5-phospho-alpha-D-ribose 1-diphosphate: step 1/9.</text>
</comment>
<comment type="subunit">
    <text evidence="1">Heteromultimer composed of HisG and HisZ subunits.</text>
</comment>
<comment type="subcellular location">
    <subcellularLocation>
        <location evidence="1">Cytoplasm</location>
    </subcellularLocation>
</comment>
<comment type="domain">
    <text>Lacks the C-terminal regulatory region which is replaced by HisZ.</text>
</comment>
<comment type="similarity">
    <text evidence="1">Belongs to the ATP phosphoribosyltransferase family. Short subfamily.</text>
</comment>
<organism>
    <name type="scientific">Burkholderia vietnamiensis (strain G4 / LMG 22486)</name>
    <name type="common">Burkholderia cepacia (strain R1808)</name>
    <dbReference type="NCBI Taxonomy" id="269482"/>
    <lineage>
        <taxon>Bacteria</taxon>
        <taxon>Pseudomonadati</taxon>
        <taxon>Pseudomonadota</taxon>
        <taxon>Betaproteobacteria</taxon>
        <taxon>Burkholderiales</taxon>
        <taxon>Burkholderiaceae</taxon>
        <taxon>Burkholderia</taxon>
        <taxon>Burkholderia cepacia complex</taxon>
    </lineage>
</organism>
<name>HIS1_BURVG</name>
<accession>A4JAW2</accession>
<dbReference type="EC" id="2.4.2.17" evidence="1"/>
<dbReference type="EMBL" id="CP000614">
    <property type="protein sequence ID" value="ABO53415.1"/>
    <property type="molecule type" value="Genomic_DNA"/>
</dbReference>
<dbReference type="SMR" id="A4JAW2"/>
<dbReference type="KEGG" id="bvi:Bcep1808_0403"/>
<dbReference type="eggNOG" id="COG0040">
    <property type="taxonomic scope" value="Bacteria"/>
</dbReference>
<dbReference type="HOGENOM" id="CLU_038115_2_0_4"/>
<dbReference type="UniPathway" id="UPA00031">
    <property type="reaction ID" value="UER00006"/>
</dbReference>
<dbReference type="Proteomes" id="UP000002287">
    <property type="component" value="Chromosome 1"/>
</dbReference>
<dbReference type="GO" id="GO:0005737">
    <property type="term" value="C:cytoplasm"/>
    <property type="evidence" value="ECO:0007669"/>
    <property type="project" value="UniProtKB-SubCell"/>
</dbReference>
<dbReference type="GO" id="GO:0005524">
    <property type="term" value="F:ATP binding"/>
    <property type="evidence" value="ECO:0007669"/>
    <property type="project" value="UniProtKB-KW"/>
</dbReference>
<dbReference type="GO" id="GO:0003879">
    <property type="term" value="F:ATP phosphoribosyltransferase activity"/>
    <property type="evidence" value="ECO:0007669"/>
    <property type="project" value="UniProtKB-UniRule"/>
</dbReference>
<dbReference type="GO" id="GO:0000105">
    <property type="term" value="P:L-histidine biosynthetic process"/>
    <property type="evidence" value="ECO:0007669"/>
    <property type="project" value="UniProtKB-UniRule"/>
</dbReference>
<dbReference type="CDD" id="cd13595">
    <property type="entry name" value="PBP2_HisGs"/>
    <property type="match status" value="1"/>
</dbReference>
<dbReference type="FunFam" id="3.40.190.10:FF:000011">
    <property type="entry name" value="ATP phosphoribosyltransferase"/>
    <property type="match status" value="1"/>
</dbReference>
<dbReference type="Gene3D" id="3.40.190.10">
    <property type="entry name" value="Periplasmic binding protein-like II"/>
    <property type="match status" value="2"/>
</dbReference>
<dbReference type="HAMAP" id="MF_01018">
    <property type="entry name" value="HisG_Short"/>
    <property type="match status" value="1"/>
</dbReference>
<dbReference type="InterPro" id="IPR013820">
    <property type="entry name" value="ATP_PRibTrfase_cat"/>
</dbReference>
<dbReference type="InterPro" id="IPR018198">
    <property type="entry name" value="ATP_PRibTrfase_CS"/>
</dbReference>
<dbReference type="InterPro" id="IPR001348">
    <property type="entry name" value="ATP_PRibTrfase_HisG"/>
</dbReference>
<dbReference type="InterPro" id="IPR024893">
    <property type="entry name" value="ATP_PRibTrfase_HisG_short"/>
</dbReference>
<dbReference type="NCBIfam" id="TIGR00070">
    <property type="entry name" value="hisG"/>
    <property type="match status" value="1"/>
</dbReference>
<dbReference type="PANTHER" id="PTHR21403:SF8">
    <property type="entry name" value="ATP PHOSPHORIBOSYLTRANSFERASE"/>
    <property type="match status" value="1"/>
</dbReference>
<dbReference type="PANTHER" id="PTHR21403">
    <property type="entry name" value="ATP PHOSPHORIBOSYLTRANSFERASE ATP-PRTASE"/>
    <property type="match status" value="1"/>
</dbReference>
<dbReference type="Pfam" id="PF01634">
    <property type="entry name" value="HisG"/>
    <property type="match status" value="1"/>
</dbReference>
<dbReference type="SUPFAM" id="SSF53850">
    <property type="entry name" value="Periplasmic binding protein-like II"/>
    <property type="match status" value="1"/>
</dbReference>
<dbReference type="PROSITE" id="PS01316">
    <property type="entry name" value="ATP_P_PHORIBOSYLTR"/>
    <property type="match status" value="1"/>
</dbReference>
<feature type="chain" id="PRO_1000063276" description="ATP phosphoribosyltransferase">
    <location>
        <begin position="1"/>
        <end position="217"/>
    </location>
</feature>
<proteinExistence type="inferred from homology"/>
<protein>
    <recommendedName>
        <fullName evidence="1">ATP phosphoribosyltransferase</fullName>
        <shortName evidence="1">ATP-PRT</shortName>
        <shortName evidence="1">ATP-PRTase</shortName>
        <ecNumber evidence="1">2.4.2.17</ecNumber>
    </recommendedName>
</protein>
<reference key="1">
    <citation type="submission" date="2007-03" db="EMBL/GenBank/DDBJ databases">
        <title>Complete sequence of chromosome 1 of Burkholderia vietnamiensis G4.</title>
        <authorList>
            <consortium name="US DOE Joint Genome Institute"/>
            <person name="Copeland A."/>
            <person name="Lucas S."/>
            <person name="Lapidus A."/>
            <person name="Barry K."/>
            <person name="Detter J.C."/>
            <person name="Glavina del Rio T."/>
            <person name="Hammon N."/>
            <person name="Israni S."/>
            <person name="Dalin E."/>
            <person name="Tice H."/>
            <person name="Pitluck S."/>
            <person name="Chain P."/>
            <person name="Malfatti S."/>
            <person name="Shin M."/>
            <person name="Vergez L."/>
            <person name="Schmutz J."/>
            <person name="Larimer F."/>
            <person name="Land M."/>
            <person name="Hauser L."/>
            <person name="Kyrpides N."/>
            <person name="Tiedje J."/>
            <person name="Richardson P."/>
        </authorList>
    </citation>
    <scope>NUCLEOTIDE SEQUENCE [LARGE SCALE GENOMIC DNA]</scope>
    <source>
        <strain>G4 / LMG 22486</strain>
    </source>
</reference>
<keyword id="KW-0028">Amino-acid biosynthesis</keyword>
<keyword id="KW-0067">ATP-binding</keyword>
<keyword id="KW-0963">Cytoplasm</keyword>
<keyword id="KW-0328">Glycosyltransferase</keyword>
<keyword id="KW-0368">Histidine biosynthesis</keyword>
<keyword id="KW-0547">Nucleotide-binding</keyword>
<keyword id="KW-0808">Transferase</keyword>